<evidence type="ECO:0000250" key="1"/>
<evidence type="ECO:0000255" key="2"/>
<evidence type="ECO:0000305" key="3"/>
<dbReference type="EMBL" id="EU926084">
    <property type="protein sequence ID" value="ACI41416.1"/>
    <property type="molecule type" value="mRNA"/>
</dbReference>
<dbReference type="EMBL" id="FM864088">
    <property type="protein sequence ID" value="CAS03685.1"/>
    <property type="molecule type" value="mRNA"/>
</dbReference>
<dbReference type="SMR" id="B6DD00"/>
<dbReference type="ArachnoServer" id="AS001016">
    <property type="toxin name" value="U8-lycotoxin-Ls1m"/>
</dbReference>
<dbReference type="GO" id="GO:0005576">
    <property type="term" value="C:extracellular region"/>
    <property type="evidence" value="ECO:0007669"/>
    <property type="project" value="UniProtKB-SubCell"/>
</dbReference>
<dbReference type="GO" id="GO:0090729">
    <property type="term" value="F:toxin activity"/>
    <property type="evidence" value="ECO:0007669"/>
    <property type="project" value="UniProtKB-KW"/>
</dbReference>
<dbReference type="InterPro" id="IPR019553">
    <property type="entry name" value="Spider_toxin_CSTX_knottin"/>
</dbReference>
<dbReference type="Pfam" id="PF10530">
    <property type="entry name" value="Toxin_35"/>
    <property type="match status" value="1"/>
</dbReference>
<keyword id="KW-1015">Disulfide bond</keyword>
<keyword id="KW-0964">Secreted</keyword>
<keyword id="KW-0732">Signal</keyword>
<keyword id="KW-0800">Toxin</keyword>
<reference key="1">
    <citation type="journal article" date="2010" name="Zoology">
        <title>Transcriptome analysis of the venom glands of the Chinese wolf spider Lycosa singoriensis.</title>
        <authorList>
            <person name="Zhang Y."/>
            <person name="Chen J."/>
            <person name="Tang X."/>
            <person name="Wang F."/>
            <person name="Jiang L."/>
            <person name="Xiong X."/>
            <person name="Wang M."/>
            <person name="Rong M."/>
            <person name="Liu Z."/>
            <person name="Liang S."/>
        </authorList>
    </citation>
    <scope>NUCLEOTIDE SEQUENCE [LARGE SCALE MRNA]</scope>
    <source>
        <tissue>Venom gland</tissue>
    </source>
</reference>
<feature type="signal peptide" evidence="2">
    <location>
        <begin position="1"/>
        <end position="20"/>
    </location>
</feature>
<feature type="propeptide" id="PRO_0000401819" evidence="1">
    <location>
        <begin position="21"/>
        <end position="26"/>
    </location>
</feature>
<feature type="chain" id="PRO_0000401820" description="U8-lycotoxin-Ls1m">
    <location>
        <begin position="27"/>
        <end position="77"/>
    </location>
</feature>
<sequence>MKLIIFTGLVLFSIVSLIEAQAENEKPCLPEYKVCTHAPGNCCSDLVCDCYGRYKSGAQIGRNCFCLQKGVIYKREN</sequence>
<comment type="subcellular location">
    <subcellularLocation>
        <location evidence="1">Secreted</location>
    </subcellularLocation>
</comment>
<comment type="tissue specificity">
    <text>Expressed by the venom gland.</text>
</comment>
<comment type="PTM">
    <text evidence="1">Contains 4 disulfide bonds.</text>
</comment>
<comment type="similarity">
    <text evidence="3">Belongs to the neurotoxin 19 (CSTX) family. 08 (U8-Lctx) subfamily.</text>
</comment>
<proteinExistence type="evidence at transcript level"/>
<accession>B6DD00</accession>
<name>TX829_LYCSI</name>
<organism>
    <name type="scientific">Lycosa singoriensis</name>
    <name type="common">Wolf spider</name>
    <name type="synonym">Aranea singoriensis</name>
    <dbReference type="NCBI Taxonomy" id="434756"/>
    <lineage>
        <taxon>Eukaryota</taxon>
        <taxon>Metazoa</taxon>
        <taxon>Ecdysozoa</taxon>
        <taxon>Arthropoda</taxon>
        <taxon>Chelicerata</taxon>
        <taxon>Arachnida</taxon>
        <taxon>Araneae</taxon>
        <taxon>Araneomorphae</taxon>
        <taxon>Entelegynae</taxon>
        <taxon>Lycosoidea</taxon>
        <taxon>Lycosidae</taxon>
        <taxon>Lycosa</taxon>
    </lineage>
</organism>
<protein>
    <recommendedName>
        <fullName>U8-lycotoxin-Ls1m</fullName>
    </recommendedName>
    <alternativeName>
        <fullName>Toxin-like structure LSTX-H29</fullName>
    </alternativeName>
</protein>